<organism>
    <name type="scientific">Solibacter usitatus (strain Ellin6076)</name>
    <dbReference type="NCBI Taxonomy" id="234267"/>
    <lineage>
        <taxon>Bacteria</taxon>
        <taxon>Pseudomonadati</taxon>
        <taxon>Acidobacteriota</taxon>
        <taxon>Terriglobia</taxon>
        <taxon>Bryobacterales</taxon>
        <taxon>Solibacteraceae</taxon>
        <taxon>Candidatus Solibacter</taxon>
    </lineage>
</organism>
<protein>
    <recommendedName>
        <fullName evidence="1">DNA-directed RNA polymerase subunit beta</fullName>
        <shortName evidence="1">RNAP subunit beta</shortName>
        <ecNumber evidence="1">2.7.7.6</ecNumber>
    </recommendedName>
    <alternativeName>
        <fullName evidence="1">RNA polymerase subunit beta</fullName>
    </alternativeName>
    <alternativeName>
        <fullName evidence="1">Transcriptase subunit beta</fullName>
    </alternativeName>
</protein>
<evidence type="ECO:0000255" key="1">
    <source>
        <dbReference type="HAMAP-Rule" id="MF_01321"/>
    </source>
</evidence>
<evidence type="ECO:0000305" key="2"/>
<keyword id="KW-0240">DNA-directed RNA polymerase</keyword>
<keyword id="KW-0548">Nucleotidyltransferase</keyword>
<keyword id="KW-0804">Transcription</keyword>
<keyword id="KW-0808">Transferase</keyword>
<gene>
    <name evidence="1" type="primary">rpoB</name>
    <name type="ordered locus">Acid_5457</name>
</gene>
<sequence length="1432" mass="160437">MDLQNYGAAPERVDFSKIKTSIPIPNLIEVQKKSYERFLQMDLLPNEREDIGLQTVFNSVFPISDFRGVSDLEFVDYSIGNWECKCGNLKGLHHLRSTCRNCGATIRTDPFHAGDILCHHCGTFNKNVVTFCNKCGDPVGLQLKYDMQECQERGMTYAAPLKVTIRLTVYSKDPETQKKSVRDIKEQEVFFGEIPLMTDNGTFIINGTERVIVSQLHRSPGVFFERVPAQGYFLGKIIPYRGSWVEFEYDNKNILYVRIDRKRKFYGSVFLRALGLKTDEQILRAFYRVSKMEIRDKKIYWNVDEGLTGLKLSHAITTKSGDTVVGQGKKITASLFKELQKAKIEKVEVAPNDLEGAHVVADVVDMTTGEVMIDANSELTTTVMSKLIEAGITEFEIFFPERDDVGTVIAATIRKDAVKTQNEALIEIYRKLRPGDPPTLDTATQLFQGMFFDPRKYDFSRVGRMKFNIKLYDRSDATALDKRTLDSDDFKSTIRYLLKLRKGIGAVDDIDHLGNRRVRAVGELLENQFRIGLVRMERAIKEKMSVYQEMSTAMPHDLVNAKPVMAAIREFFGSSQLSQFMDQTNPLSEITHKRRLSALGPGGLSRERAGFEVRDVHPTHYGRICPIETPEGPNIGLISSLSCFARINEYGFIESPYRKVIKGAVVDEVKVLNPGDTDYKVGDIVRRGDMDEANRKLGGKKQAAEFEAHCEYLSAWEEDKWTIAQANVELDEKGRIVPDLSNARQAGNFVLKPKEEIEYIDVSPKQLVSVAASLIPFLENDDANRALMGSNMQRQAVPLLRADAPYVGTGMEMVTARDSGAVVLNKRAGVVDSVDSERIIVRVEGAAHEGQLSREVGADIYQLTKFKRSNQNTCINQKPIVRVGQRVPKGAVLADGPCTDLGELALGRNVLVAFMPWRGYNFEDAILVSEKLVKEDYYTSIHIEEFEIEARDTKLGPEEITRDIPNIADSFLRNLDESGIIRIGATVKPGDILVGKVTPKGETQLTPEEKLLRAIFGEKAGDVKDASLYCPPGIEGTIVDCKIFSRKGQEKDERSKAIEESQIQRLQRNLQDEIRILTDERAKRLGTLLDGKKLLADLHDEKTNKRLLSKDTELTRELIEKMKSRDLKRMRLANKDPRLNEQIDEIEEMTSRQIAVLEKITDEKIAKLRKGDELPPGVIKLVKVYIAMKRKLSVGDKMAGRHGNKGVIARILPEEDMPYLPDGTPVEIVLNPLGVPSRMNVGQILETHLGWAAKALGVQFATPVFDGATEREIKKNLTAAGLPTSGKTALFDGMTGTQFEQPVTVGYIYMLKLSHLVDDKIHARSIGPYSLITQQPLGGKAQFGGQRFGEMEVWALEAYGAAYILQELLTAKSDDVYGRAKIYEAIVKGEAAIEPGVPESFNVLIRELQSLCLDVELMKKPREVPDTALAAD</sequence>
<comment type="function">
    <text evidence="1">DNA-dependent RNA polymerase catalyzes the transcription of DNA into RNA using the four ribonucleoside triphosphates as substrates.</text>
</comment>
<comment type="catalytic activity">
    <reaction evidence="1">
        <text>RNA(n) + a ribonucleoside 5'-triphosphate = RNA(n+1) + diphosphate</text>
        <dbReference type="Rhea" id="RHEA:21248"/>
        <dbReference type="Rhea" id="RHEA-COMP:14527"/>
        <dbReference type="Rhea" id="RHEA-COMP:17342"/>
        <dbReference type="ChEBI" id="CHEBI:33019"/>
        <dbReference type="ChEBI" id="CHEBI:61557"/>
        <dbReference type="ChEBI" id="CHEBI:140395"/>
        <dbReference type="EC" id="2.7.7.6"/>
    </reaction>
</comment>
<comment type="subunit">
    <text evidence="1">The RNAP catalytic core consists of 2 alpha, 1 beta, 1 beta' and 1 omega subunit. When a sigma factor is associated with the core the holoenzyme is formed, which can initiate transcription.</text>
</comment>
<comment type="similarity">
    <text evidence="1">Belongs to the RNA polymerase beta chain family.</text>
</comment>
<comment type="sequence caution" evidence="2">
    <conflict type="erroneous initiation">
        <sequence resource="EMBL-CDS" id="ABJ86404"/>
    </conflict>
</comment>
<reference key="1">
    <citation type="journal article" date="2009" name="Appl. Environ. Microbiol.">
        <title>Three genomes from the phylum Acidobacteria provide insight into the lifestyles of these microorganisms in soils.</title>
        <authorList>
            <person name="Ward N.L."/>
            <person name="Challacombe J.F."/>
            <person name="Janssen P.H."/>
            <person name="Henrissat B."/>
            <person name="Coutinho P.M."/>
            <person name="Wu M."/>
            <person name="Xie G."/>
            <person name="Haft D.H."/>
            <person name="Sait M."/>
            <person name="Badger J."/>
            <person name="Barabote R.D."/>
            <person name="Bradley B."/>
            <person name="Brettin T.S."/>
            <person name="Brinkac L.M."/>
            <person name="Bruce D."/>
            <person name="Creasy T."/>
            <person name="Daugherty S.C."/>
            <person name="Davidsen T.M."/>
            <person name="DeBoy R.T."/>
            <person name="Detter J.C."/>
            <person name="Dodson R.J."/>
            <person name="Durkin A.S."/>
            <person name="Ganapathy A."/>
            <person name="Gwinn-Giglio M."/>
            <person name="Han C.S."/>
            <person name="Khouri H."/>
            <person name="Kiss H."/>
            <person name="Kothari S.P."/>
            <person name="Madupu R."/>
            <person name="Nelson K.E."/>
            <person name="Nelson W.C."/>
            <person name="Paulsen I."/>
            <person name="Penn K."/>
            <person name="Ren Q."/>
            <person name="Rosovitz M.J."/>
            <person name="Selengut J.D."/>
            <person name="Shrivastava S."/>
            <person name="Sullivan S.A."/>
            <person name="Tapia R."/>
            <person name="Thompson L.S."/>
            <person name="Watkins K.L."/>
            <person name="Yang Q."/>
            <person name="Yu C."/>
            <person name="Zafar N."/>
            <person name="Zhou L."/>
            <person name="Kuske C.R."/>
        </authorList>
    </citation>
    <scope>NUCLEOTIDE SEQUENCE [LARGE SCALE GENOMIC DNA]</scope>
    <source>
        <strain>Ellin6076</strain>
    </source>
</reference>
<proteinExistence type="inferred from homology"/>
<name>RPOB_SOLUE</name>
<feature type="chain" id="PRO_0000300406" description="DNA-directed RNA polymerase subunit beta">
    <location>
        <begin position="1"/>
        <end position="1432"/>
    </location>
</feature>
<accession>Q01VB1</accession>
<dbReference type="EC" id="2.7.7.6" evidence="1"/>
<dbReference type="EMBL" id="CP000473">
    <property type="protein sequence ID" value="ABJ86404.1"/>
    <property type="status" value="ALT_INIT"/>
    <property type="molecule type" value="Genomic_DNA"/>
</dbReference>
<dbReference type="SMR" id="Q01VB1"/>
<dbReference type="FunCoup" id="Q01VB1">
    <property type="interactions" value="630"/>
</dbReference>
<dbReference type="STRING" id="234267.Acid_5457"/>
<dbReference type="KEGG" id="sus:Acid_5457"/>
<dbReference type="eggNOG" id="COG0085">
    <property type="taxonomic scope" value="Bacteria"/>
</dbReference>
<dbReference type="HOGENOM" id="CLU_000524_4_1_0"/>
<dbReference type="InParanoid" id="Q01VB1"/>
<dbReference type="OrthoDB" id="9803954at2"/>
<dbReference type="GO" id="GO:0000428">
    <property type="term" value="C:DNA-directed RNA polymerase complex"/>
    <property type="evidence" value="ECO:0007669"/>
    <property type="project" value="UniProtKB-KW"/>
</dbReference>
<dbReference type="GO" id="GO:0003677">
    <property type="term" value="F:DNA binding"/>
    <property type="evidence" value="ECO:0007669"/>
    <property type="project" value="UniProtKB-UniRule"/>
</dbReference>
<dbReference type="GO" id="GO:0003899">
    <property type="term" value="F:DNA-directed RNA polymerase activity"/>
    <property type="evidence" value="ECO:0007669"/>
    <property type="project" value="UniProtKB-UniRule"/>
</dbReference>
<dbReference type="GO" id="GO:0032549">
    <property type="term" value="F:ribonucleoside binding"/>
    <property type="evidence" value="ECO:0007669"/>
    <property type="project" value="InterPro"/>
</dbReference>
<dbReference type="GO" id="GO:0006351">
    <property type="term" value="P:DNA-templated transcription"/>
    <property type="evidence" value="ECO:0007669"/>
    <property type="project" value="UniProtKB-UniRule"/>
</dbReference>
<dbReference type="CDD" id="cd00653">
    <property type="entry name" value="RNA_pol_B_RPB2"/>
    <property type="match status" value="1"/>
</dbReference>
<dbReference type="FunFam" id="3.90.1800.10:FF:000001">
    <property type="entry name" value="DNA-directed RNA polymerase subunit beta"/>
    <property type="match status" value="1"/>
</dbReference>
<dbReference type="Gene3D" id="2.40.50.100">
    <property type="match status" value="1"/>
</dbReference>
<dbReference type="Gene3D" id="2.40.50.150">
    <property type="match status" value="1"/>
</dbReference>
<dbReference type="Gene3D" id="3.30.60.280">
    <property type="match status" value="1"/>
</dbReference>
<dbReference type="Gene3D" id="3.90.1100.10">
    <property type="match status" value="2"/>
</dbReference>
<dbReference type="Gene3D" id="2.30.150.10">
    <property type="entry name" value="DNA-directed RNA polymerase, beta subunit, external 1 domain"/>
    <property type="match status" value="1"/>
</dbReference>
<dbReference type="Gene3D" id="2.40.270.10">
    <property type="entry name" value="DNA-directed RNA polymerase, subunit 2, domain 6"/>
    <property type="match status" value="2"/>
</dbReference>
<dbReference type="Gene3D" id="3.90.1800.10">
    <property type="entry name" value="RNA polymerase alpha subunit dimerisation domain"/>
    <property type="match status" value="1"/>
</dbReference>
<dbReference type="Gene3D" id="3.90.1110.10">
    <property type="entry name" value="RNA polymerase Rpb2, domain 2"/>
    <property type="match status" value="1"/>
</dbReference>
<dbReference type="HAMAP" id="MF_01321">
    <property type="entry name" value="RNApol_bact_RpoB"/>
    <property type="match status" value="1"/>
</dbReference>
<dbReference type="InterPro" id="IPR042107">
    <property type="entry name" value="DNA-dir_RNA_pol_bsu_ext_1_sf"/>
</dbReference>
<dbReference type="InterPro" id="IPR019462">
    <property type="entry name" value="DNA-dir_RNA_pol_bsu_external_1"/>
</dbReference>
<dbReference type="InterPro" id="IPR015712">
    <property type="entry name" value="DNA-dir_RNA_pol_su2"/>
</dbReference>
<dbReference type="InterPro" id="IPR007120">
    <property type="entry name" value="DNA-dir_RNAP_su2_dom"/>
</dbReference>
<dbReference type="InterPro" id="IPR037033">
    <property type="entry name" value="DNA-dir_RNAP_su2_hyb_sf"/>
</dbReference>
<dbReference type="InterPro" id="IPR010243">
    <property type="entry name" value="RNA_pol_bsu_bac"/>
</dbReference>
<dbReference type="InterPro" id="IPR007121">
    <property type="entry name" value="RNA_pol_bsu_CS"/>
</dbReference>
<dbReference type="InterPro" id="IPR007644">
    <property type="entry name" value="RNA_pol_bsu_protrusion"/>
</dbReference>
<dbReference type="InterPro" id="IPR007642">
    <property type="entry name" value="RNA_pol_Rpb2_2"/>
</dbReference>
<dbReference type="InterPro" id="IPR037034">
    <property type="entry name" value="RNA_pol_Rpb2_2_sf"/>
</dbReference>
<dbReference type="InterPro" id="IPR007645">
    <property type="entry name" value="RNA_pol_Rpb2_3"/>
</dbReference>
<dbReference type="InterPro" id="IPR007641">
    <property type="entry name" value="RNA_pol_Rpb2_7"/>
</dbReference>
<dbReference type="InterPro" id="IPR014724">
    <property type="entry name" value="RNA_pol_RPB2_OB-fold"/>
</dbReference>
<dbReference type="NCBIfam" id="NF001616">
    <property type="entry name" value="PRK00405.1"/>
    <property type="match status" value="1"/>
</dbReference>
<dbReference type="NCBIfam" id="TIGR02013">
    <property type="entry name" value="rpoB"/>
    <property type="match status" value="1"/>
</dbReference>
<dbReference type="PANTHER" id="PTHR20856">
    <property type="entry name" value="DNA-DIRECTED RNA POLYMERASE I SUBUNIT 2"/>
    <property type="match status" value="1"/>
</dbReference>
<dbReference type="Pfam" id="PF04563">
    <property type="entry name" value="RNA_pol_Rpb2_1"/>
    <property type="match status" value="1"/>
</dbReference>
<dbReference type="Pfam" id="PF04561">
    <property type="entry name" value="RNA_pol_Rpb2_2"/>
    <property type="match status" value="2"/>
</dbReference>
<dbReference type="Pfam" id="PF04565">
    <property type="entry name" value="RNA_pol_Rpb2_3"/>
    <property type="match status" value="1"/>
</dbReference>
<dbReference type="Pfam" id="PF10385">
    <property type="entry name" value="RNA_pol_Rpb2_45"/>
    <property type="match status" value="1"/>
</dbReference>
<dbReference type="Pfam" id="PF00562">
    <property type="entry name" value="RNA_pol_Rpb2_6"/>
    <property type="match status" value="1"/>
</dbReference>
<dbReference type="Pfam" id="PF04560">
    <property type="entry name" value="RNA_pol_Rpb2_7"/>
    <property type="match status" value="1"/>
</dbReference>
<dbReference type="SUPFAM" id="SSF64484">
    <property type="entry name" value="beta and beta-prime subunits of DNA dependent RNA-polymerase"/>
    <property type="match status" value="1"/>
</dbReference>
<dbReference type="PROSITE" id="PS01166">
    <property type="entry name" value="RNA_POL_BETA"/>
    <property type="match status" value="1"/>
</dbReference>